<sequence length="239" mass="25979">MEIFPAIDLKEGRCVRLYQGEFSKETVMNEDPVAQAIIFEKLGAEILHIVDLDGAIAGESLNLPVIEKICKAVRIPVQVGGGIRSLVAVEKLLSVGVEKVILGTAALYDKSFLEEAVRLYKEKIIVGIDAKNGFVATRGWLDLSEISYISLAKQMESLGVQTIVFTDISKDGTLAGPNFEQLALLQKSVGIRLIASGGVASIQDVKKLNDMNIYGVIIGKALYEKTIDLEEVLQVTKLC</sequence>
<feature type="chain" id="PRO_1000135080" description="1-(5-phosphoribosyl)-5-[(5-phosphoribosylamino)methylideneamino] imidazole-4-carboxamide isomerase">
    <location>
        <begin position="1"/>
        <end position="239"/>
    </location>
</feature>
<feature type="active site" description="Proton acceptor" evidence="1">
    <location>
        <position position="8"/>
    </location>
</feature>
<feature type="active site" description="Proton donor" evidence="1">
    <location>
        <position position="129"/>
    </location>
</feature>
<comment type="catalytic activity">
    <reaction evidence="1">
        <text>1-(5-phospho-beta-D-ribosyl)-5-[(5-phospho-beta-D-ribosylamino)methylideneamino]imidazole-4-carboxamide = 5-[(5-phospho-1-deoxy-D-ribulos-1-ylimino)methylamino]-1-(5-phospho-beta-D-ribosyl)imidazole-4-carboxamide</text>
        <dbReference type="Rhea" id="RHEA:15469"/>
        <dbReference type="ChEBI" id="CHEBI:58435"/>
        <dbReference type="ChEBI" id="CHEBI:58525"/>
        <dbReference type="EC" id="5.3.1.16"/>
    </reaction>
</comment>
<comment type="pathway">
    <text evidence="1">Amino-acid biosynthesis; L-histidine biosynthesis; L-histidine from 5-phospho-alpha-D-ribose 1-diphosphate: step 4/9.</text>
</comment>
<comment type="subcellular location">
    <subcellularLocation>
        <location evidence="1">Cytoplasm</location>
    </subcellularLocation>
</comment>
<comment type="similarity">
    <text evidence="1">Belongs to the HisA/HisF family.</text>
</comment>
<gene>
    <name evidence="1" type="primary">hisA</name>
    <name type="ordered locus">BCB4264_A1462</name>
</gene>
<reference key="1">
    <citation type="submission" date="2008-10" db="EMBL/GenBank/DDBJ databases">
        <title>Genome sequence of Bacillus cereus B4264.</title>
        <authorList>
            <person name="Dodson R.J."/>
            <person name="Durkin A.S."/>
            <person name="Rosovitz M.J."/>
            <person name="Rasko D.A."/>
            <person name="Hoffmaster A."/>
            <person name="Ravel J."/>
            <person name="Sutton G."/>
        </authorList>
    </citation>
    <scope>NUCLEOTIDE SEQUENCE [LARGE SCALE GENOMIC DNA]</scope>
    <source>
        <strain>B4264</strain>
    </source>
</reference>
<dbReference type="EC" id="5.3.1.16" evidence="1"/>
<dbReference type="EMBL" id="CP001176">
    <property type="protein sequence ID" value="ACK59840.1"/>
    <property type="molecule type" value="Genomic_DNA"/>
</dbReference>
<dbReference type="RefSeq" id="WP_000402296.1">
    <property type="nucleotide sequence ID" value="NZ_VEHB01000003.1"/>
</dbReference>
<dbReference type="SMR" id="B7HHG4"/>
<dbReference type="KEGG" id="bcb:BCB4264_A1462"/>
<dbReference type="HOGENOM" id="CLU_048577_1_1_9"/>
<dbReference type="UniPathway" id="UPA00031">
    <property type="reaction ID" value="UER00009"/>
</dbReference>
<dbReference type="Proteomes" id="UP000007096">
    <property type="component" value="Chromosome"/>
</dbReference>
<dbReference type="GO" id="GO:0005737">
    <property type="term" value="C:cytoplasm"/>
    <property type="evidence" value="ECO:0007669"/>
    <property type="project" value="UniProtKB-SubCell"/>
</dbReference>
<dbReference type="GO" id="GO:0003949">
    <property type="term" value="F:1-(5-phosphoribosyl)-5-[(5-phosphoribosylamino)methylideneamino]imidazole-4-carboxamide isomerase activity"/>
    <property type="evidence" value="ECO:0007669"/>
    <property type="project" value="UniProtKB-UniRule"/>
</dbReference>
<dbReference type="GO" id="GO:0000105">
    <property type="term" value="P:L-histidine biosynthetic process"/>
    <property type="evidence" value="ECO:0007669"/>
    <property type="project" value="UniProtKB-UniRule"/>
</dbReference>
<dbReference type="GO" id="GO:0000162">
    <property type="term" value="P:L-tryptophan biosynthetic process"/>
    <property type="evidence" value="ECO:0007669"/>
    <property type="project" value="TreeGrafter"/>
</dbReference>
<dbReference type="CDD" id="cd04732">
    <property type="entry name" value="HisA"/>
    <property type="match status" value="1"/>
</dbReference>
<dbReference type="FunFam" id="3.20.20.70:FF:000009">
    <property type="entry name" value="1-(5-phosphoribosyl)-5-[(5-phosphoribosylamino)methylideneamino] imidazole-4-carboxamide isomerase"/>
    <property type="match status" value="1"/>
</dbReference>
<dbReference type="Gene3D" id="3.20.20.70">
    <property type="entry name" value="Aldolase class I"/>
    <property type="match status" value="1"/>
</dbReference>
<dbReference type="HAMAP" id="MF_01014">
    <property type="entry name" value="HisA"/>
    <property type="match status" value="1"/>
</dbReference>
<dbReference type="InterPro" id="IPR013785">
    <property type="entry name" value="Aldolase_TIM"/>
</dbReference>
<dbReference type="InterPro" id="IPR006062">
    <property type="entry name" value="His_biosynth"/>
</dbReference>
<dbReference type="InterPro" id="IPR006063">
    <property type="entry name" value="HisA_bact_arch"/>
</dbReference>
<dbReference type="InterPro" id="IPR044524">
    <property type="entry name" value="Isoase_HisA-like"/>
</dbReference>
<dbReference type="InterPro" id="IPR023016">
    <property type="entry name" value="Isoase_HisA-like_bact"/>
</dbReference>
<dbReference type="InterPro" id="IPR011060">
    <property type="entry name" value="RibuloseP-bd_barrel"/>
</dbReference>
<dbReference type="NCBIfam" id="TIGR00007">
    <property type="entry name" value="1-(5-phosphoribosyl)-5-[(5-phosphoribosylamino)methylideneamino]imidazole-4-carboxamide isomerase"/>
    <property type="match status" value="1"/>
</dbReference>
<dbReference type="PANTHER" id="PTHR43090">
    <property type="entry name" value="1-(5-PHOSPHORIBOSYL)-5-[(5-PHOSPHORIBOSYLAMINO)METHYLIDENEAMINO] IMIDAZOLE-4-CARBOXAMIDE ISOMERASE"/>
    <property type="match status" value="1"/>
</dbReference>
<dbReference type="PANTHER" id="PTHR43090:SF2">
    <property type="entry name" value="1-(5-PHOSPHORIBOSYL)-5-[(5-PHOSPHORIBOSYLAMINO)METHYLIDENEAMINO] IMIDAZOLE-4-CARBOXAMIDE ISOMERASE"/>
    <property type="match status" value="1"/>
</dbReference>
<dbReference type="Pfam" id="PF00977">
    <property type="entry name" value="His_biosynth"/>
    <property type="match status" value="1"/>
</dbReference>
<dbReference type="SUPFAM" id="SSF51366">
    <property type="entry name" value="Ribulose-phoshate binding barrel"/>
    <property type="match status" value="1"/>
</dbReference>
<keyword id="KW-0028">Amino-acid biosynthesis</keyword>
<keyword id="KW-0963">Cytoplasm</keyword>
<keyword id="KW-0368">Histidine biosynthesis</keyword>
<keyword id="KW-0413">Isomerase</keyword>
<protein>
    <recommendedName>
        <fullName evidence="1">1-(5-phosphoribosyl)-5-[(5-phosphoribosylamino)methylideneamino] imidazole-4-carboxamide isomerase</fullName>
        <ecNumber evidence="1">5.3.1.16</ecNumber>
    </recommendedName>
    <alternativeName>
        <fullName evidence="1">Phosphoribosylformimino-5-aminoimidazole carboxamide ribotide isomerase</fullName>
    </alternativeName>
</protein>
<evidence type="ECO:0000255" key="1">
    <source>
        <dbReference type="HAMAP-Rule" id="MF_01014"/>
    </source>
</evidence>
<name>HIS4_BACC4</name>
<accession>B7HHG4</accession>
<organism>
    <name type="scientific">Bacillus cereus (strain B4264)</name>
    <dbReference type="NCBI Taxonomy" id="405532"/>
    <lineage>
        <taxon>Bacteria</taxon>
        <taxon>Bacillati</taxon>
        <taxon>Bacillota</taxon>
        <taxon>Bacilli</taxon>
        <taxon>Bacillales</taxon>
        <taxon>Bacillaceae</taxon>
        <taxon>Bacillus</taxon>
        <taxon>Bacillus cereus group</taxon>
    </lineage>
</organism>
<proteinExistence type="inferred from homology"/>